<comment type="catalytic activity">
    <reaction evidence="1">
        <text>Endohydrolysis of (1-&gt;4)-alpha-D-glucosidic linkages in polysaccharides containing three or more (1-&gt;4)-alpha-linked D-glucose units.</text>
        <dbReference type="EC" id="3.2.1.1"/>
    </reaction>
</comment>
<comment type="cofactor">
    <cofactor evidence="2 3 6 7 8 9 10 11 12">
        <name>Ca(2+)</name>
        <dbReference type="ChEBI" id="CHEBI:29108"/>
    </cofactor>
    <text evidence="2 3 6 7 8 9 10 11 12">Binds 1 Ca(2+) ion per subunit.</text>
</comment>
<comment type="cofactor">
    <cofactor evidence="2 3 6 7 10 12">
        <name>chloride</name>
        <dbReference type="ChEBI" id="CHEBI:17996"/>
    </cofactor>
    <text evidence="2 3 6 7 10 12">Binds 1 Cl(-) ion per subunit.</text>
</comment>
<comment type="subunit">
    <text evidence="4 14">Binds to the sea anemone inhibitor helianthamide and magnificamide.</text>
</comment>
<comment type="subcellular location">
    <subcellularLocation>
        <location>Secreted</location>
        <location>Extracellular space</location>
    </subcellularLocation>
</comment>
<comment type="miscellaneous">
    <text>The two forms of this enzyme, I and II, show very similar activities, molecular masses, and compositions and differ only in their isoelectric points. As no evidence for two variants were in the cDNA library of PubMed:10082956, it is most likely that isoform I (PPAI) and isoform II (PPAII) are two forms of the same protein.</text>
</comment>
<comment type="similarity">
    <text evidence="13">Belongs to the glycosyl hydrolase 13 family.</text>
</comment>
<reference key="1">
    <citation type="journal article" date="1999" name="Biochim. Biophys. Acta">
        <title>Molecular cloning and primary structure analysis of porcine pancreatic alpha-amylase.</title>
        <authorList>
            <person name="Darnis S."/>
            <person name="Juge N."/>
            <person name="Guo X.-J."/>
            <person name="Marchis-Mouren G."/>
            <person name="Puigserver A."/>
            <person name="Chaix J.-C."/>
        </authorList>
    </citation>
    <scope>NUCLEOTIDE SEQUENCE [MRNA]</scope>
    <source>
        <tissue>Pancreas</tissue>
    </source>
</reference>
<reference key="2">
    <citation type="journal article" date="1986" name="Biochim. Biophys. Acta">
        <title>Complete amino acid sequence and location of the five disulfide bridges in porcine pancreatic alpha-amylase.</title>
        <authorList>
            <person name="Pasero L."/>
            <person name="Mazzei-Pierron Y."/>
            <person name="Abadie B."/>
            <person name="Chicheportiche Y."/>
            <person name="Marchis-Mouren G."/>
        </authorList>
    </citation>
    <scope>PROTEIN SEQUENCE OF 16-511</scope>
    <scope>DISULFIDE BONDS</scope>
</reference>
<reference key="3">
    <citation type="journal article" date="1983" name="Biochem. Biophys. Res. Commun.">
        <title>Localization of the two free thiol groups in the porcine pancreatic alpha-amylase I sequence.</title>
        <authorList>
            <person name="Pasero L."/>
            <person name="Mazzei Y."/>
            <person name="Abadie B."/>
            <person name="Moinier D."/>
            <person name="Fougereau M."/>
            <person name="Marchis-Mouren G."/>
        </authorList>
    </citation>
    <scope>DISULFIDE BONDS</scope>
</reference>
<reference key="4">
    <citation type="journal article" date="2019" name="Mar. Drugs">
        <title>Magnificamide, a beta-defensin-like peptide from the mucus of the sea anemone Heteractis magnifica, is a strong inhibitor of mammalian alpha-amylases.</title>
        <authorList>
            <person name="Sintsova O."/>
            <person name="Gladkikh I."/>
            <person name="Kalinovskii A."/>
            <person name="Zelepuga E."/>
            <person name="Monastyrnaya M."/>
            <person name="Kim N."/>
            <person name="Shevchenko L."/>
            <person name="Peigneur S."/>
            <person name="Tytgat J."/>
            <person name="Kozlovskaya E."/>
            <person name="Leychenko E."/>
        </authorList>
    </citation>
    <scope>SUBUNIT</scope>
    <scope>INTERACTION WITH THE SEA ANEMONE INHIBITOR MAGNIFICAMIDE</scope>
</reference>
<reference key="5">
    <citation type="journal article" date="1980" name="Acta Crystallogr. B">
        <title>The three-dimensional structure of alpha-amylase from porcine pancreas at 5-A resolution -- the active-site location.</title>
        <authorList>
            <person name="Payan F."/>
            <person name="Haser R."/>
            <person name="Pierrot M."/>
            <person name="Frey M."/>
            <person name="Astier J.-P."/>
            <person name="Abadie B."/>
            <person name="Duee E."/>
            <person name="Buisson G."/>
        </authorList>
    </citation>
    <scope>X-RAY CRYSTALLOGRAPHY (5 ANGSTROMS)</scope>
</reference>
<reference key="6">
    <citation type="journal article" date="1987" name="EMBO J.">
        <title>Three dimensional structure of porcine pancreatic alpha-amylase at 2.9-A resolution. Role of calcium in structure and activity.</title>
        <authorList>
            <person name="Buisson G."/>
            <person name="Duee E."/>
            <person name="Haser R."/>
            <person name="Payan F."/>
        </authorList>
    </citation>
    <scope>X-RAY CRYSTALLOGRAPHY (2.9 ANGSTROMS)</scope>
    <scope>COFACTOR</scope>
    <scope>DISULFIDE BONDS</scope>
</reference>
<reference key="7">
    <citation type="journal article" date="1993" name="J. Mol. Biol.">
        <title>Structure and molecular model refinement of pig pancreatic alpha-amylase at 2.1-A resolution.</title>
        <authorList>
            <person name="Qian M."/>
            <person name="Haser R."/>
            <person name="Payan F."/>
        </authorList>
    </citation>
    <scope>X-RAY CRYSTALLOGRAPHY (2.1 ANGSTROMS)</scope>
    <scope>SEQUENCE REVISION</scope>
</reference>
<reference key="8">
    <citation type="journal article" date="1994" name="Biochemistry">
        <title>The active center of a mammalian alpha-amylase. Structure of the complex of a pancreatic alpha-amylase with a carbohydrate inhibitor refined to 2.2-A resolution.</title>
        <authorList>
            <person name="Qian M."/>
            <person name="Haser R."/>
            <person name="Buisson G."/>
            <person name="Duee E."/>
            <person name="Payan F."/>
        </authorList>
    </citation>
    <scope>X-RAY CRYSTALLOGRAPHY (2.20 ANGSTROMS) OF 16-511 IN COMPLEX WITH CALCIUM</scope>
    <scope>DISULFIDE BONDS</scope>
    <scope>COFACTOR</scope>
</reference>
<reference key="9">
    <citation type="journal article" date="1995" name="J. Mol. Biol.">
        <title>The crystal structure of porcine pancreatic alpha-amylase in complex with the microbial inhibitor Tendamistat.</title>
        <authorList>
            <person name="Wiegand G."/>
            <person name="Epp O."/>
            <person name="Huber R."/>
        </authorList>
    </citation>
    <scope>X-RAY CRYSTALLOGRAPHY (2.50 ANGSTROMS) OF 16-511 IN COMPLEX WITH INHIBITOR; CALCIUM AND CHLORIDE</scope>
    <scope>DISULFIDE BONDS</scope>
    <scope>COFACTOR</scope>
</reference>
<reference key="10">
    <citation type="journal article" date="1996" name="J. Mol. Biol.">
        <title>Carbohydrate and protein-based inhibitors of porcine pancreatic alpha-amylase: structure analysis and comparison of their binding characteristics.</title>
        <authorList>
            <person name="Machius M."/>
            <person name="Vertesy L."/>
            <person name="Huber R."/>
            <person name="Wiegand G."/>
        </authorList>
    </citation>
    <scope>X-RAY CRYSTALLOGRAPHY (2.20 ANGSTROMS) OF 17-511 IN COMPLEX WITH CALCIUM; GLUCOSE AND CHLORIDE</scope>
    <scope>DISULFIDE BONDS</scope>
    <scope>COFACTOR</scope>
</reference>
<reference key="11">
    <citation type="journal article" date="1996" name="Eur. J. Biochem.">
        <title>Crystal structure of pig pancreatic alpha-amylase isoenzyme II, in complex with the carbohydrate inhibitor acarbose.</title>
        <authorList>
            <person name="Gilles C."/>
            <person name="Astier J.-P."/>
            <person name="Marchis-Mouren G."/>
            <person name="Cambillau C."/>
            <person name="Payan F."/>
        </authorList>
    </citation>
    <scope>X-RAY CRYSTALLOGRAPHY (2.30 ANGSTROMS) OF 17-511 IN COMPLEX WITH CALCIUM</scope>
    <scope>SEQUENCE REVISION</scope>
    <scope>COFACTOR</scope>
    <scope>DISULFIDE BONDS</scope>
</reference>
<reference key="12">
    <citation type="journal article" date="1996" name="Structure">
        <title>Substrate mimicry in the active center of a mammalian alpha-amylase: structural analysis of an enzyme-inhibitor complex.</title>
        <authorList>
            <person name="Bompard-Gilles C."/>
            <person name="Rousseau P."/>
            <person name="Rouge P."/>
            <person name="Payan F."/>
        </authorList>
    </citation>
    <scope>X-RAY CRYSTALLOGRAPHY (1.85 ANGSTROMS) OF 17-511 IN COMPLEX WITH INHIBITOR AND CALCIUM</scope>
    <scope>COFACTOR</scope>
    <scope>DISULFIDE BONDS</scope>
</reference>
<reference key="13">
    <citation type="journal article" date="1997" name="Protein Sci.">
        <title>Structure of a pancreatic alpha-amylase bound to a substrate analogue at 2.03-A resolution.</title>
        <authorList>
            <person name="Qian M."/>
            <person name="Spinelli S."/>
            <person name="Driguez H."/>
            <person name="Payan F."/>
        </authorList>
    </citation>
    <scope>X-RAY CRYSTALLOGRAPHY (2.03 ANGSTROMS) OF 17-511 IN COMPLEX WITH CALCIUM AND CHLORIDE</scope>
    <scope>DISULFIDE BONDS</scope>
    <scope>COFACTOR</scope>
</reference>
<reference key="14">
    <citation type="journal article" date="2001" name="Biochemistry">
        <title>Enzyme-catalyzed condensation reaction in a mammalian alpha-amylase. High-resolution structural analysis of an enzyme-inhibitor complex.</title>
        <authorList>
            <person name="Qian M."/>
            <person name="Nahoum V."/>
            <person name="Bonicel J."/>
            <person name="Bischoff H."/>
            <person name="Henrissat B."/>
            <person name="Payan F."/>
        </authorList>
    </citation>
    <scope>X-RAY CRYSTALLOGRAPHY (1.38 ANGSTROMS) IN COMPLEX WITH CALCIUM; CHLORIDE AND OLIGOSACCHARIDE INHIBITOR</scope>
    <scope>COFACTOR</scope>
    <scope>DISULFIDE BOND</scope>
</reference>
<reference key="15">
    <citation type="journal article" date="2002" name="J. Biol. Chem.">
        <title>Three camelid VHH domains in complex with porcine pancreatic alpha-amylase. Inhibition and versatility of binding topology.</title>
        <authorList>
            <person name="Desmyter A."/>
            <person name="Spinelli S."/>
            <person name="Payan F."/>
            <person name="Lauwereys M."/>
            <person name="Wyns L."/>
            <person name="Muyldermans S."/>
            <person name="Cambillau C."/>
        </authorList>
    </citation>
    <scope>X-RAY CRYSTALLOGRAPHY (1.60 ANGSTROMS) OF 16-511 IN COMPLEX WITH CALCIUM AND CHLORIDE</scope>
    <scope>DISULFIDE BONDS</scope>
    <scope>COFACTOR</scope>
</reference>
<reference key="16">
    <citation type="journal article" date="2016" name="ACS Cent. Sci.">
        <title>Potent human alpha-amylase inhibition by the beta-defensin-like protein helianthamide.</title>
        <authorList>
            <person name="Tysoe C."/>
            <person name="Williams L.K."/>
            <person name="Keyzers R."/>
            <person name="Nguyen N.T."/>
            <person name="Tarling C."/>
            <person name="Wicki J."/>
            <person name="Goddard-Borger E.D."/>
            <person name="Aguda A.H."/>
            <person name="Perry S."/>
            <person name="Foster L.J."/>
            <person name="Andersen R.J."/>
            <person name="Brayer G.D."/>
            <person name="Withers S.G."/>
        </authorList>
    </citation>
    <scope>X-RAY CRYSTALLOGRAPHY (2.60 ANGSTROMS) IN COMPLEX WITH THE SEA ANEMONE INHIBITOR HELIANTHAMIDE</scope>
    <scope>SUBUNIT</scope>
    <scope>INTERACTION WITH THE SEA ANEMONE INHIBITOR HELIANTHAMIDE</scope>
</reference>
<keyword id="KW-0002">3D-structure</keyword>
<keyword id="KW-0106">Calcium</keyword>
<keyword id="KW-0119">Carbohydrate metabolism</keyword>
<keyword id="KW-0868">Chloride</keyword>
<keyword id="KW-0903">Direct protein sequencing</keyword>
<keyword id="KW-1015">Disulfide bond</keyword>
<keyword id="KW-0325">Glycoprotein</keyword>
<keyword id="KW-0326">Glycosidase</keyword>
<keyword id="KW-0378">Hydrolase</keyword>
<keyword id="KW-0479">Metal-binding</keyword>
<keyword id="KW-0873">Pyrrolidone carboxylic acid</keyword>
<keyword id="KW-1185">Reference proteome</keyword>
<keyword id="KW-0964">Secreted</keyword>
<keyword id="KW-0732">Signal</keyword>
<organism>
    <name type="scientific">Sus scrofa</name>
    <name type="common">Pig</name>
    <dbReference type="NCBI Taxonomy" id="9823"/>
    <lineage>
        <taxon>Eukaryota</taxon>
        <taxon>Metazoa</taxon>
        <taxon>Chordata</taxon>
        <taxon>Craniata</taxon>
        <taxon>Vertebrata</taxon>
        <taxon>Euteleostomi</taxon>
        <taxon>Mammalia</taxon>
        <taxon>Eutheria</taxon>
        <taxon>Laurasiatheria</taxon>
        <taxon>Artiodactyla</taxon>
        <taxon>Suina</taxon>
        <taxon>Suidae</taxon>
        <taxon>Sus</taxon>
    </lineage>
</organism>
<dbReference type="EC" id="3.2.1.1" evidence="1"/>
<dbReference type="EMBL" id="AF064742">
    <property type="protein sequence ID" value="AAF02828.1"/>
    <property type="molecule type" value="mRNA"/>
</dbReference>
<dbReference type="PIR" id="A25412">
    <property type="entry name" value="ALPGP"/>
</dbReference>
<dbReference type="RefSeq" id="NP_999360.1">
    <property type="nucleotide sequence ID" value="NM_214195.1"/>
</dbReference>
<dbReference type="PDB" id="1BVN">
    <property type="method" value="X-ray"/>
    <property type="resolution" value="2.50 A"/>
    <property type="chains" value="P=16-511"/>
</dbReference>
<dbReference type="PDB" id="1DHK">
    <property type="method" value="X-ray"/>
    <property type="resolution" value="1.85 A"/>
    <property type="chains" value="A=17-511"/>
</dbReference>
<dbReference type="PDB" id="1HX0">
    <property type="method" value="X-ray"/>
    <property type="resolution" value="1.38 A"/>
    <property type="chains" value="A=16-511"/>
</dbReference>
<dbReference type="PDB" id="1JFH">
    <property type="method" value="X-ray"/>
    <property type="resolution" value="2.03 A"/>
    <property type="chains" value="A=17-511"/>
</dbReference>
<dbReference type="PDB" id="1KXQ">
    <property type="method" value="X-ray"/>
    <property type="resolution" value="1.60 A"/>
    <property type="chains" value="A/B/C/D=16-511"/>
</dbReference>
<dbReference type="PDB" id="1KXT">
    <property type="method" value="X-ray"/>
    <property type="resolution" value="2.00 A"/>
    <property type="chains" value="A/C/E=16-511"/>
</dbReference>
<dbReference type="PDB" id="1KXV">
    <property type="method" value="X-ray"/>
    <property type="resolution" value="1.60 A"/>
    <property type="chains" value="A/B=16-511"/>
</dbReference>
<dbReference type="PDB" id="1OSE">
    <property type="method" value="X-ray"/>
    <property type="resolution" value="2.30 A"/>
    <property type="chains" value="A=17-511"/>
</dbReference>
<dbReference type="PDB" id="1PIF">
    <property type="method" value="X-ray"/>
    <property type="resolution" value="2.30 A"/>
    <property type="chains" value="A=17-511"/>
</dbReference>
<dbReference type="PDB" id="1PIG">
    <property type="method" value="X-ray"/>
    <property type="resolution" value="2.20 A"/>
    <property type="chains" value="A=17-511"/>
</dbReference>
<dbReference type="PDB" id="1PPI">
    <property type="method" value="X-ray"/>
    <property type="resolution" value="2.20 A"/>
    <property type="chains" value="A=16-511"/>
</dbReference>
<dbReference type="PDB" id="1UA3">
    <property type="method" value="X-ray"/>
    <property type="resolution" value="2.01 A"/>
    <property type="chains" value="A=16-511"/>
</dbReference>
<dbReference type="PDB" id="1VAH">
    <property type="method" value="X-ray"/>
    <property type="resolution" value="2.40 A"/>
    <property type="chains" value="A=16-511"/>
</dbReference>
<dbReference type="PDB" id="1WO2">
    <property type="method" value="X-ray"/>
    <property type="resolution" value="2.01 A"/>
    <property type="chains" value="A=16-511"/>
</dbReference>
<dbReference type="PDB" id="3L2L">
    <property type="method" value="X-ray"/>
    <property type="resolution" value="2.11 A"/>
    <property type="chains" value="A=16-511"/>
</dbReference>
<dbReference type="PDB" id="3L2M">
    <property type="method" value="X-ray"/>
    <property type="resolution" value="1.97 A"/>
    <property type="chains" value="A=16-511"/>
</dbReference>
<dbReference type="PDB" id="4X0N">
    <property type="method" value="X-ray"/>
    <property type="resolution" value="2.60 A"/>
    <property type="chains" value="A=17-511"/>
</dbReference>
<dbReference type="PDBsum" id="1BVN"/>
<dbReference type="PDBsum" id="1DHK"/>
<dbReference type="PDBsum" id="1HX0"/>
<dbReference type="PDBsum" id="1JFH"/>
<dbReference type="PDBsum" id="1KXQ"/>
<dbReference type="PDBsum" id="1KXT"/>
<dbReference type="PDBsum" id="1KXV"/>
<dbReference type="PDBsum" id="1OSE"/>
<dbReference type="PDBsum" id="1PIF"/>
<dbReference type="PDBsum" id="1PIG"/>
<dbReference type="PDBsum" id="1PPI"/>
<dbReference type="PDBsum" id="1UA3"/>
<dbReference type="PDBsum" id="1VAH"/>
<dbReference type="PDBsum" id="1WO2"/>
<dbReference type="PDBsum" id="3L2L"/>
<dbReference type="PDBsum" id="3L2M"/>
<dbReference type="PDBsum" id="4X0N"/>
<dbReference type="SMR" id="P00690"/>
<dbReference type="FunCoup" id="P00690">
    <property type="interactions" value="63"/>
</dbReference>
<dbReference type="MINT" id="P00690"/>
<dbReference type="STRING" id="9823.ENSSSCP00000007308"/>
<dbReference type="BindingDB" id="P00690"/>
<dbReference type="ChEMBL" id="CHEMBL5730"/>
<dbReference type="DrugCentral" id="P00690"/>
<dbReference type="Allergome" id="970">
    <property type="allergen name" value="Sus s Amylase"/>
</dbReference>
<dbReference type="CAZy" id="GH13">
    <property type="family name" value="Glycoside Hydrolase Family 13"/>
</dbReference>
<dbReference type="GlyCosmos" id="P00690">
    <property type="glycosylation" value="1 site, No reported glycans"/>
</dbReference>
<dbReference type="GlyGen" id="P00690">
    <property type="glycosylation" value="1 site"/>
</dbReference>
<dbReference type="PaxDb" id="9823-ENSSSCP00000007308"/>
<dbReference type="PeptideAtlas" id="P00690"/>
<dbReference type="ABCD" id="P00690">
    <property type="antibodies" value="3 sequenced antibodies"/>
</dbReference>
<dbReference type="GeneID" id="397397"/>
<dbReference type="KEGG" id="ssc:397397"/>
<dbReference type="CTD" id="397397"/>
<dbReference type="eggNOG" id="KOG2212">
    <property type="taxonomic scope" value="Eukaryota"/>
</dbReference>
<dbReference type="InParanoid" id="P00690"/>
<dbReference type="OrthoDB" id="550577at2759"/>
<dbReference type="BRENDA" id="3.2.1.1">
    <property type="organism ID" value="6170"/>
</dbReference>
<dbReference type="SABIO-RK" id="P00690"/>
<dbReference type="EvolutionaryTrace" id="P00690"/>
<dbReference type="PRO" id="PR:P00690"/>
<dbReference type="Proteomes" id="UP000008227">
    <property type="component" value="Unplaced"/>
</dbReference>
<dbReference type="Proteomes" id="UP000314985">
    <property type="component" value="Unplaced"/>
</dbReference>
<dbReference type="Proteomes" id="UP000694570">
    <property type="component" value="Unplaced"/>
</dbReference>
<dbReference type="Proteomes" id="UP000694571">
    <property type="component" value="Unplaced"/>
</dbReference>
<dbReference type="Proteomes" id="UP000694720">
    <property type="component" value="Unplaced"/>
</dbReference>
<dbReference type="Proteomes" id="UP000694722">
    <property type="component" value="Unplaced"/>
</dbReference>
<dbReference type="Proteomes" id="UP000694723">
    <property type="component" value="Unplaced"/>
</dbReference>
<dbReference type="Proteomes" id="UP000694724">
    <property type="component" value="Unplaced"/>
</dbReference>
<dbReference type="Proteomes" id="UP000694725">
    <property type="component" value="Unplaced"/>
</dbReference>
<dbReference type="Proteomes" id="UP000694726">
    <property type="component" value="Unplaced"/>
</dbReference>
<dbReference type="Proteomes" id="UP000694727">
    <property type="component" value="Unplaced"/>
</dbReference>
<dbReference type="Proteomes" id="UP000694728">
    <property type="component" value="Unplaced"/>
</dbReference>
<dbReference type="GO" id="GO:0005615">
    <property type="term" value="C:extracellular space"/>
    <property type="evidence" value="ECO:0000250"/>
    <property type="project" value="UniProtKB"/>
</dbReference>
<dbReference type="GO" id="GO:0004556">
    <property type="term" value="F:alpha-amylase activity"/>
    <property type="evidence" value="ECO:0000250"/>
    <property type="project" value="UniProtKB"/>
</dbReference>
<dbReference type="GO" id="GO:0005509">
    <property type="term" value="F:calcium ion binding"/>
    <property type="evidence" value="ECO:0000250"/>
    <property type="project" value="UniProtKB"/>
</dbReference>
<dbReference type="GO" id="GO:0031404">
    <property type="term" value="F:chloride ion binding"/>
    <property type="evidence" value="ECO:0000250"/>
    <property type="project" value="UniProtKB"/>
</dbReference>
<dbReference type="GO" id="GO:0016052">
    <property type="term" value="P:carbohydrate catabolic process"/>
    <property type="evidence" value="ECO:0000250"/>
    <property type="project" value="UniProtKB"/>
</dbReference>
<dbReference type="GO" id="GO:0005975">
    <property type="term" value="P:carbohydrate metabolic process"/>
    <property type="evidence" value="ECO:0000318"/>
    <property type="project" value="GO_Central"/>
</dbReference>
<dbReference type="CDD" id="cd11317">
    <property type="entry name" value="AmyAc_bac_euk_AmyA"/>
    <property type="match status" value="1"/>
</dbReference>
<dbReference type="FunFam" id="2.60.40.1180:FF:000020">
    <property type="entry name" value="Pancreatic alpha-amylase"/>
    <property type="match status" value="1"/>
</dbReference>
<dbReference type="FunFam" id="3.20.20.80:FF:000056">
    <property type="entry name" value="Pancreatic alpha-amylase"/>
    <property type="match status" value="1"/>
</dbReference>
<dbReference type="Gene3D" id="3.20.20.80">
    <property type="entry name" value="Glycosidases"/>
    <property type="match status" value="1"/>
</dbReference>
<dbReference type="Gene3D" id="2.60.40.1180">
    <property type="entry name" value="Golgi alpha-mannosidase II"/>
    <property type="match status" value="1"/>
</dbReference>
<dbReference type="InterPro" id="IPR006048">
    <property type="entry name" value="A-amylase/branching_C"/>
</dbReference>
<dbReference type="InterPro" id="IPR031319">
    <property type="entry name" value="A-amylase_C"/>
</dbReference>
<dbReference type="InterPro" id="IPR006046">
    <property type="entry name" value="Alpha_amylase"/>
</dbReference>
<dbReference type="InterPro" id="IPR006047">
    <property type="entry name" value="Glyco_hydro_13_cat_dom"/>
</dbReference>
<dbReference type="InterPro" id="IPR013780">
    <property type="entry name" value="Glyco_hydro_b"/>
</dbReference>
<dbReference type="InterPro" id="IPR017853">
    <property type="entry name" value="Glycoside_hydrolase_SF"/>
</dbReference>
<dbReference type="PANTHER" id="PTHR43447">
    <property type="entry name" value="ALPHA-AMYLASE"/>
    <property type="match status" value="1"/>
</dbReference>
<dbReference type="Pfam" id="PF00128">
    <property type="entry name" value="Alpha-amylase"/>
    <property type="match status" value="1"/>
</dbReference>
<dbReference type="Pfam" id="PF02806">
    <property type="entry name" value="Alpha-amylase_C"/>
    <property type="match status" value="1"/>
</dbReference>
<dbReference type="PRINTS" id="PR00110">
    <property type="entry name" value="ALPHAAMYLASE"/>
</dbReference>
<dbReference type="SMART" id="SM00642">
    <property type="entry name" value="Aamy"/>
    <property type="match status" value="1"/>
</dbReference>
<dbReference type="SMART" id="SM00632">
    <property type="entry name" value="Aamy_C"/>
    <property type="match status" value="1"/>
</dbReference>
<dbReference type="SUPFAM" id="SSF51445">
    <property type="entry name" value="(Trans)glycosidases"/>
    <property type="match status" value="1"/>
</dbReference>
<dbReference type="SUPFAM" id="SSF51011">
    <property type="entry name" value="Glycosyl hydrolase domain"/>
    <property type="match status" value="1"/>
</dbReference>
<sequence>MKLFLLLSAFGFCWAQYAPQTQSGRTSIVHLFEWRWVDIALECERYLGPKGFGGVQVSPPNENIVVTNPSRPWWERYQPVSYKLCTRSGNENEFRDMVTRCNNVGVRIYVDAVINHMCGSGAAAGTGTTCGSYCNPGNREFPAVPYSAWDFNDGKCKTASGGIESYNDPYQVRDCQLVGLLDLALEKDYVRSMIADYLNKLIDIGVAGFRIDASKHMWPGDIKAVLDKLHNLNTNWFPAGSRPFIFQEVIDLGGEAIQSSEYFGNGRVTEFKYGAKLGTVVRKWSGEKMSYLKNWGEGWGFMPSDRALVFVDNHDNQRGHGAGGASILTFWDARLYKVAVGFMLAHPYGFTRVMSSYRWARNFVNGQDVNDWIGPPNNNGVIKEVTINADTTCGNDWVCEHRWRQIRNMVWFRNVVDGQPFANWWANGSNQVAFGRGNRGFIVFNNDDWQLSSTLQTGLPGGTYCDVISGDKVGNSCTGIKVYVSSDGTAQFSISNSAEDPFIAIHAESKL</sequence>
<feature type="signal peptide" evidence="5">
    <location>
        <begin position="1"/>
        <end position="15"/>
    </location>
</feature>
<feature type="chain" id="PRO_0000001399" description="Pancreatic alpha-amylase">
    <location>
        <begin position="16"/>
        <end position="511"/>
    </location>
</feature>
<feature type="active site" description="Nucleophile">
    <location>
        <position position="212"/>
    </location>
</feature>
<feature type="active site" description="Proton donor">
    <location>
        <position position="248"/>
    </location>
</feature>
<feature type="binding site" evidence="2 3 7 8 9 10 11 12">
    <location>
        <position position="115"/>
    </location>
    <ligand>
        <name>Ca(2+)</name>
        <dbReference type="ChEBI" id="CHEBI:29108"/>
    </ligand>
</feature>
<feature type="binding site" evidence="2 3 7 8 9 10 11 12">
    <location>
        <position position="173"/>
    </location>
    <ligand>
        <name>Ca(2+)</name>
        <dbReference type="ChEBI" id="CHEBI:29108"/>
    </ligand>
</feature>
<feature type="binding site" evidence="2 3 7 8 9 10 11 12">
    <location>
        <position position="182"/>
    </location>
    <ligand>
        <name>Ca(2+)</name>
        <dbReference type="ChEBI" id="CHEBI:29108"/>
    </ligand>
</feature>
<feature type="binding site" evidence="2 3 7 10 12">
    <location>
        <position position="210"/>
    </location>
    <ligand>
        <name>chloride</name>
        <dbReference type="ChEBI" id="CHEBI:17996"/>
    </ligand>
</feature>
<feature type="binding site" evidence="2 3 7 8 9 10 11 12">
    <location>
        <position position="216"/>
    </location>
    <ligand>
        <name>Ca(2+)</name>
        <dbReference type="ChEBI" id="CHEBI:29108"/>
    </ligand>
</feature>
<feature type="binding site" evidence="13">
    <location>
        <position position="313"/>
    </location>
    <ligand>
        <name>chloride</name>
        <dbReference type="ChEBI" id="CHEBI:17996"/>
    </ligand>
</feature>
<feature type="binding site" evidence="2 3 7 10 12">
    <location>
        <position position="352"/>
    </location>
    <ligand>
        <name>chloride</name>
        <dbReference type="ChEBI" id="CHEBI:17996"/>
    </ligand>
</feature>
<feature type="site" description="Transition state stabilizer" evidence="1">
    <location>
        <position position="315"/>
    </location>
</feature>
<feature type="modified residue" description="Pyrrolidone carboxylic acid" evidence="1">
    <location>
        <position position="16"/>
    </location>
</feature>
<feature type="glycosylation site" description="N-linked (GlcNAc...) asparagine">
    <location>
        <position position="427"/>
    </location>
</feature>
<feature type="disulfide bond" evidence="2 3 7 8 9 10 11 12 15">
    <location>
        <begin position="43"/>
        <end position="101"/>
    </location>
</feature>
<feature type="disulfide bond" evidence="2 3 7 8 9 10 11 12 15">
    <location>
        <begin position="85"/>
        <end position="130"/>
    </location>
</feature>
<feature type="disulfide bond" evidence="2 3 7 8 9 10 11 12 15">
    <location>
        <begin position="156"/>
        <end position="175"/>
    </location>
</feature>
<feature type="disulfide bond" evidence="2 3 7 8 9 10 11 12 15">
    <location>
        <begin position="393"/>
        <end position="399"/>
    </location>
</feature>
<feature type="disulfide bond" evidence="2 3 7 8 9 10 11 12 15">
    <location>
        <begin position="465"/>
        <end position="477"/>
    </location>
</feature>
<feature type="sequence conflict" description="In Ref. 2; AA sequence." evidence="13" ref="2">
    <original>N</original>
    <variation>S</variation>
    <location>
        <position position="138"/>
    </location>
</feature>
<feature type="sequence conflict" description="In Ref. 2; AA sequence." evidence="13" ref="2">
    <original>Q</original>
    <variation>E</variation>
    <location>
        <position position="367"/>
    </location>
</feature>
<feature type="sequence conflict" description="In Ref. 2; AA sequence." evidence="13" ref="2">
    <original>Q</original>
    <variation>E</variation>
    <location>
        <position position="405"/>
    </location>
</feature>
<feature type="sequence conflict" description="In Ref. 2; AA sequence." evidence="13" ref="2">
    <original>Q</original>
    <variation>E</variation>
    <location>
        <position position="419"/>
    </location>
</feature>
<feature type="sequence conflict" description="In Ref. 2; AA sequence." evidence="13" ref="2">
    <original>A</original>
    <variation>D</variation>
    <location>
        <position position="426"/>
    </location>
</feature>
<feature type="strand" evidence="16">
    <location>
        <begin position="27"/>
        <end position="31"/>
    </location>
</feature>
<feature type="helix" evidence="16">
    <location>
        <begin position="36"/>
        <end position="45"/>
    </location>
</feature>
<feature type="turn" evidence="16">
    <location>
        <begin position="46"/>
        <end position="51"/>
    </location>
</feature>
<feature type="strand" evidence="16">
    <location>
        <begin position="54"/>
        <end position="57"/>
    </location>
</feature>
<feature type="turn" evidence="16">
    <location>
        <begin position="67"/>
        <end position="70"/>
    </location>
</feature>
<feature type="helix" evidence="16">
    <location>
        <begin position="73"/>
        <end position="77"/>
    </location>
</feature>
<feature type="strand" evidence="16">
    <location>
        <begin position="78"/>
        <end position="80"/>
    </location>
</feature>
<feature type="strand" evidence="19">
    <location>
        <begin position="84"/>
        <end position="86"/>
    </location>
</feature>
<feature type="helix" evidence="16">
    <location>
        <begin position="91"/>
        <end position="103"/>
    </location>
</feature>
<feature type="strand" evidence="16">
    <location>
        <begin position="107"/>
        <end position="112"/>
    </location>
</feature>
<feature type="strand" evidence="16">
    <location>
        <begin position="115"/>
        <end position="119"/>
    </location>
</feature>
<feature type="strand" evidence="17">
    <location>
        <begin position="124"/>
        <end position="126"/>
    </location>
</feature>
<feature type="strand" evidence="16">
    <location>
        <begin position="128"/>
        <end position="130"/>
    </location>
</feature>
<feature type="helix" evidence="16">
    <location>
        <begin position="136"/>
        <end position="138"/>
    </location>
</feature>
<feature type="turn" evidence="16">
    <location>
        <begin position="142"/>
        <end position="145"/>
    </location>
</feature>
<feature type="helix" evidence="16">
    <location>
        <begin position="148"/>
        <end position="150"/>
    </location>
</feature>
<feature type="turn" evidence="16">
    <location>
        <begin position="153"/>
        <end position="155"/>
    </location>
</feature>
<feature type="strand" evidence="18">
    <location>
        <begin position="158"/>
        <end position="162"/>
    </location>
</feature>
<feature type="helix" evidence="16">
    <location>
        <begin position="169"/>
        <end position="174"/>
    </location>
</feature>
<feature type="strand" evidence="16">
    <location>
        <begin position="175"/>
        <end position="177"/>
    </location>
</feature>
<feature type="strand" evidence="16">
    <location>
        <begin position="180"/>
        <end position="183"/>
    </location>
</feature>
<feature type="helix" evidence="16">
    <location>
        <begin position="188"/>
        <end position="204"/>
    </location>
</feature>
<feature type="strand" evidence="16">
    <location>
        <begin position="208"/>
        <end position="211"/>
    </location>
</feature>
<feature type="helix" evidence="16">
    <location>
        <begin position="214"/>
        <end position="216"/>
    </location>
</feature>
<feature type="helix" evidence="16">
    <location>
        <begin position="219"/>
        <end position="226"/>
    </location>
</feature>
<feature type="turn" evidence="16">
    <location>
        <begin position="234"/>
        <end position="236"/>
    </location>
</feature>
<feature type="strand" evidence="16">
    <location>
        <begin position="244"/>
        <end position="247"/>
    </location>
</feature>
<feature type="strand" evidence="16">
    <location>
        <begin position="253"/>
        <end position="257"/>
    </location>
</feature>
<feature type="helix" evidence="16">
    <location>
        <begin position="259"/>
        <end position="262"/>
    </location>
</feature>
<feature type="turn" evidence="16">
    <location>
        <begin position="263"/>
        <end position="265"/>
    </location>
</feature>
<feature type="strand" evidence="16">
    <location>
        <begin position="266"/>
        <end position="269"/>
    </location>
</feature>
<feature type="helix" evidence="16">
    <location>
        <begin position="272"/>
        <end position="281"/>
    </location>
</feature>
<feature type="helix" evidence="16">
    <location>
        <begin position="289"/>
        <end position="294"/>
    </location>
</feature>
<feature type="helix" evidence="16">
    <location>
        <begin position="297"/>
        <end position="299"/>
    </location>
</feature>
<feature type="helix" evidence="16">
    <location>
        <begin position="304"/>
        <end position="306"/>
    </location>
</feature>
<feature type="strand" evidence="16">
    <location>
        <begin position="307"/>
        <end position="309"/>
    </location>
</feature>
<feature type="helix" evidence="16">
    <location>
        <begin position="316"/>
        <end position="318"/>
    </location>
</feature>
<feature type="strand" evidence="17">
    <location>
        <begin position="319"/>
        <end position="321"/>
    </location>
</feature>
<feature type="helix" evidence="16">
    <location>
        <begin position="324"/>
        <end position="326"/>
    </location>
</feature>
<feature type="helix" evidence="16">
    <location>
        <begin position="330"/>
        <end position="332"/>
    </location>
</feature>
<feature type="helix" evidence="16">
    <location>
        <begin position="333"/>
        <end position="345"/>
    </location>
</feature>
<feature type="strand" evidence="16">
    <location>
        <begin position="348"/>
        <end position="355"/>
    </location>
</feature>
<feature type="strand" evidence="20">
    <location>
        <begin position="363"/>
        <end position="366"/>
    </location>
</feature>
<feature type="turn" evidence="16">
    <location>
        <begin position="369"/>
        <end position="372"/>
    </location>
</feature>
<feature type="strand" evidence="16">
    <location>
        <begin position="375"/>
        <end position="378"/>
    </location>
</feature>
<feature type="helix" evidence="16">
    <location>
        <begin position="400"/>
        <end position="402"/>
    </location>
</feature>
<feature type="helix" evidence="16">
    <location>
        <begin position="404"/>
        <end position="415"/>
    </location>
</feature>
<feature type="turn" evidence="16">
    <location>
        <begin position="416"/>
        <end position="418"/>
    </location>
</feature>
<feature type="strand" evidence="16">
    <location>
        <begin position="421"/>
        <end position="426"/>
    </location>
</feature>
<feature type="strand" evidence="16">
    <location>
        <begin position="428"/>
        <end position="436"/>
    </location>
</feature>
<feature type="turn" evidence="16">
    <location>
        <begin position="437"/>
        <end position="439"/>
    </location>
</feature>
<feature type="strand" evidence="16">
    <location>
        <begin position="440"/>
        <end position="445"/>
    </location>
</feature>
<feature type="strand" evidence="16">
    <location>
        <begin position="447"/>
        <end position="449"/>
    </location>
</feature>
<feature type="strand" evidence="16">
    <location>
        <begin position="451"/>
        <end position="456"/>
    </location>
</feature>
<feature type="strand" evidence="16">
    <location>
        <begin position="461"/>
        <end position="465"/>
    </location>
</feature>
<feature type="turn" evidence="16">
    <location>
        <begin position="467"/>
        <end position="469"/>
    </location>
</feature>
<feature type="strand" evidence="16">
    <location>
        <begin position="476"/>
        <end position="479"/>
    </location>
</feature>
<feature type="strand" evidence="16">
    <location>
        <begin position="481"/>
        <end position="484"/>
    </location>
</feature>
<feature type="strand" evidence="16">
    <location>
        <begin position="488"/>
        <end position="494"/>
    </location>
</feature>
<feature type="strand" evidence="17">
    <location>
        <begin position="498"/>
        <end position="500"/>
    </location>
</feature>
<feature type="strand" evidence="16">
    <location>
        <begin position="502"/>
        <end position="506"/>
    </location>
</feature>
<feature type="helix" evidence="16">
    <location>
        <begin position="507"/>
        <end position="509"/>
    </location>
</feature>
<evidence type="ECO:0000250" key="1">
    <source>
        <dbReference type="UniProtKB" id="P04746"/>
    </source>
</evidence>
<evidence type="ECO:0000269" key="2">
    <source>
    </source>
</evidence>
<evidence type="ECO:0000269" key="3">
    <source>
    </source>
</evidence>
<evidence type="ECO:0000269" key="4">
    <source>
    </source>
</evidence>
<evidence type="ECO:0000269" key="5">
    <source>
    </source>
</evidence>
<evidence type="ECO:0000269" key="6">
    <source>
    </source>
</evidence>
<evidence type="ECO:0000269" key="7">
    <source>
    </source>
</evidence>
<evidence type="ECO:0000269" key="8">
    <source>
    </source>
</evidence>
<evidence type="ECO:0000269" key="9">
    <source>
    </source>
</evidence>
<evidence type="ECO:0000269" key="10">
    <source>
    </source>
</evidence>
<evidence type="ECO:0000269" key="11">
    <source>
    </source>
</evidence>
<evidence type="ECO:0000269" key="12">
    <source>
    </source>
</evidence>
<evidence type="ECO:0000305" key="13"/>
<evidence type="ECO:0000305" key="14">
    <source>
    </source>
</evidence>
<evidence type="ECO:0000305" key="15">
    <source>
    </source>
</evidence>
<evidence type="ECO:0007829" key="16">
    <source>
        <dbReference type="PDB" id="1HX0"/>
    </source>
</evidence>
<evidence type="ECO:0007829" key="17">
    <source>
        <dbReference type="PDB" id="1KXQ"/>
    </source>
</evidence>
<evidence type="ECO:0007829" key="18">
    <source>
        <dbReference type="PDB" id="1KXV"/>
    </source>
</evidence>
<evidence type="ECO:0007829" key="19">
    <source>
        <dbReference type="PDB" id="1PIF"/>
    </source>
</evidence>
<evidence type="ECO:0007829" key="20">
    <source>
        <dbReference type="PDB" id="3L2M"/>
    </source>
</evidence>
<accession>P00690</accession>
<accession>Q9TUE4</accession>
<protein>
    <recommendedName>
        <fullName>Pancreatic alpha-amylase</fullName>
        <shortName>PA</shortName>
        <ecNumber evidence="1">3.2.1.1</ecNumber>
    </recommendedName>
    <alternativeName>
        <fullName>1,4-alpha-D-glucan glucanohydrolase</fullName>
    </alternativeName>
</protein>
<gene>
    <name type="primary">AMY2</name>
</gene>
<proteinExistence type="evidence at protein level"/>
<name>AMYP_PIG</name>